<organism>
    <name type="scientific">Mus musculus</name>
    <name type="common">Mouse</name>
    <dbReference type="NCBI Taxonomy" id="10090"/>
    <lineage>
        <taxon>Eukaryota</taxon>
        <taxon>Metazoa</taxon>
        <taxon>Chordata</taxon>
        <taxon>Craniata</taxon>
        <taxon>Vertebrata</taxon>
        <taxon>Euteleostomi</taxon>
        <taxon>Mammalia</taxon>
        <taxon>Eutheria</taxon>
        <taxon>Euarchontoglires</taxon>
        <taxon>Glires</taxon>
        <taxon>Rodentia</taxon>
        <taxon>Myomorpha</taxon>
        <taxon>Muroidea</taxon>
        <taxon>Muridae</taxon>
        <taxon>Murinae</taxon>
        <taxon>Mus</taxon>
        <taxon>Mus</taxon>
    </lineage>
</organism>
<comment type="function">
    <text>May be involved in transcriptional regulation.</text>
</comment>
<comment type="subcellular location">
    <subcellularLocation>
        <location evidence="3">Nucleus</location>
    </subcellularLocation>
</comment>
<comment type="similarity">
    <text evidence="3">Belongs to the krueppel C2H2-type zinc-finger protein family.</text>
</comment>
<feature type="chain" id="PRO_0000296274" description="Zinc finger protein 664">
    <location>
        <begin position="1"/>
        <end position="261"/>
    </location>
</feature>
<feature type="zinc finger region" description="C2H2-type 1" evidence="2">
    <location>
        <begin position="3"/>
        <end position="25"/>
    </location>
</feature>
<feature type="zinc finger region" description="C2H2-type 2" evidence="2">
    <location>
        <begin position="31"/>
        <end position="53"/>
    </location>
</feature>
<feature type="zinc finger region" description="C2H2-type 3" evidence="2">
    <location>
        <begin position="59"/>
        <end position="81"/>
    </location>
</feature>
<feature type="zinc finger region" description="C2H2-type 4" evidence="2">
    <location>
        <begin position="87"/>
        <end position="109"/>
    </location>
</feature>
<feature type="zinc finger region" description="C2H2-type 5" evidence="2">
    <location>
        <begin position="115"/>
        <end position="137"/>
    </location>
</feature>
<feature type="zinc finger region" description="C2H2-type 6" evidence="2">
    <location>
        <begin position="143"/>
        <end position="165"/>
    </location>
</feature>
<feature type="zinc finger region" description="C2H2-type 7" evidence="2">
    <location>
        <begin position="171"/>
        <end position="193"/>
    </location>
</feature>
<feature type="zinc finger region" description="C2H2-type 8" evidence="2">
    <location>
        <begin position="199"/>
        <end position="221"/>
    </location>
</feature>
<feature type="zinc finger region" description="C2H2-type 9" evidence="2">
    <location>
        <begin position="227"/>
        <end position="249"/>
    </location>
</feature>
<feature type="cross-link" description="Glycyl lysine isopeptide (Lys-Gly) (interchain with G-Cter in SUMO2)" evidence="1">
    <location>
        <position position="257"/>
    </location>
</feature>
<sequence length="261" mass="30326">MIYKCPMCREFFSERADLFMHQKIHTAEKPHKCDKCDKGFFHISELHIHWRDHTGEKVYKCDDCVKDFSTTTKLNRHKKIHTVEKPYKCYECGKAFNWSSHLQIHMRVHTGEKPYVCSECGRGFSNSSNLCMHQRVHTGEKPFKCEECGKAFRHTSSLCMHQRVHTGEKPYKCYECGKAFSQSSSLCIHQRVHTGEKPYRCCGCGKAFSQSSSLCIHQRVHTGEKPFKCDECGKAFSQSTSLCIHQRVHTKERNHLKISVI</sequence>
<evidence type="ECO:0000250" key="1">
    <source>
        <dbReference type="UniProtKB" id="Q8N3J9"/>
    </source>
</evidence>
<evidence type="ECO:0000255" key="2">
    <source>
        <dbReference type="PROSITE-ProRule" id="PRU00042"/>
    </source>
</evidence>
<evidence type="ECO:0000305" key="3"/>
<proteinExistence type="evidence at transcript level"/>
<name>ZN664_MOUSE</name>
<gene>
    <name type="primary">Znf664</name>
    <name type="synonym">Zfp664</name>
</gene>
<accession>Q4VA44</accession>
<keyword id="KW-0238">DNA-binding</keyword>
<keyword id="KW-1017">Isopeptide bond</keyword>
<keyword id="KW-0479">Metal-binding</keyword>
<keyword id="KW-0539">Nucleus</keyword>
<keyword id="KW-1185">Reference proteome</keyword>
<keyword id="KW-0677">Repeat</keyword>
<keyword id="KW-0804">Transcription</keyword>
<keyword id="KW-0805">Transcription regulation</keyword>
<keyword id="KW-0832">Ubl conjugation</keyword>
<keyword id="KW-0862">Zinc</keyword>
<keyword id="KW-0863">Zinc-finger</keyword>
<reference key="1">
    <citation type="journal article" date="2004" name="Genome Res.">
        <title>The status, quality, and expansion of the NIH full-length cDNA project: the Mammalian Gene Collection (MGC).</title>
        <authorList>
            <consortium name="The MGC Project Team"/>
        </authorList>
    </citation>
    <scope>NUCLEOTIDE SEQUENCE [LARGE SCALE MRNA]</scope>
    <source>
        <strain>C57BL/6J</strain>
        <tissue>Eye</tissue>
    </source>
</reference>
<dbReference type="EMBL" id="BC096550">
    <property type="protein sequence ID" value="AAH96550.2"/>
    <property type="molecule type" value="mRNA"/>
</dbReference>
<dbReference type="RefSeq" id="NP_001075219.1">
    <property type="nucleotide sequence ID" value="NM_001081750.1"/>
</dbReference>
<dbReference type="SMR" id="Q4VA44"/>
<dbReference type="FunCoup" id="Q4VA44">
    <property type="interactions" value="514"/>
</dbReference>
<dbReference type="STRING" id="10090.ENSMUSP00000107048"/>
<dbReference type="iPTMnet" id="Q4VA44"/>
<dbReference type="PhosphoSitePlus" id="Q4VA44"/>
<dbReference type="PaxDb" id="10090-ENSMUSP00000107048"/>
<dbReference type="ProteomicsDB" id="302138"/>
<dbReference type="GeneID" id="269704"/>
<dbReference type="KEGG" id="mmu:269704"/>
<dbReference type="AGR" id="MGI:2442505"/>
<dbReference type="CTD" id="269704"/>
<dbReference type="MGI" id="MGI:2442505">
    <property type="gene designation" value="Zfp664"/>
</dbReference>
<dbReference type="eggNOG" id="KOG1721">
    <property type="taxonomic scope" value="Eukaryota"/>
</dbReference>
<dbReference type="InParanoid" id="Q4VA44"/>
<dbReference type="OrthoDB" id="40579at2759"/>
<dbReference type="Reactome" id="R-MMU-212436">
    <property type="pathway name" value="Generic Transcription Pathway"/>
</dbReference>
<dbReference type="BioGRID-ORCS" id="269704">
    <property type="hits" value="1 hit in 78 CRISPR screens"/>
</dbReference>
<dbReference type="ChiTaRS" id="Zfp664">
    <property type="organism name" value="mouse"/>
</dbReference>
<dbReference type="PRO" id="PR:Q4VA44"/>
<dbReference type="Proteomes" id="UP000000589">
    <property type="component" value="Unplaced"/>
</dbReference>
<dbReference type="RNAct" id="Q4VA44">
    <property type="molecule type" value="protein"/>
</dbReference>
<dbReference type="GO" id="GO:0005634">
    <property type="term" value="C:nucleus"/>
    <property type="evidence" value="ECO:0007669"/>
    <property type="project" value="UniProtKB-SubCell"/>
</dbReference>
<dbReference type="GO" id="GO:0003677">
    <property type="term" value="F:DNA binding"/>
    <property type="evidence" value="ECO:0007669"/>
    <property type="project" value="UniProtKB-KW"/>
</dbReference>
<dbReference type="GO" id="GO:0008270">
    <property type="term" value="F:zinc ion binding"/>
    <property type="evidence" value="ECO:0007669"/>
    <property type="project" value="UniProtKB-KW"/>
</dbReference>
<dbReference type="FunFam" id="3.30.160.60:FF:000029">
    <property type="entry name" value="GLI family zinc finger 4"/>
    <property type="match status" value="3"/>
</dbReference>
<dbReference type="FunFam" id="3.30.160.60:FF:000661">
    <property type="entry name" value="paternally-expressed gene 3 protein-like"/>
    <property type="match status" value="1"/>
</dbReference>
<dbReference type="FunFam" id="3.30.160.60:FF:002090">
    <property type="entry name" value="Zinc finger protein 473"/>
    <property type="match status" value="1"/>
</dbReference>
<dbReference type="FunFam" id="3.30.160.60:FF:001256">
    <property type="entry name" value="zinc finger protein 664"/>
    <property type="match status" value="1"/>
</dbReference>
<dbReference type="FunFam" id="3.30.160.60:FF:001310">
    <property type="entry name" value="zinc finger protein 664"/>
    <property type="match status" value="1"/>
</dbReference>
<dbReference type="FunFam" id="3.30.160.60:FF:001493">
    <property type="entry name" value="zinc finger protein 664"/>
    <property type="match status" value="1"/>
</dbReference>
<dbReference type="Gene3D" id="3.30.160.60">
    <property type="entry name" value="Classic Zinc Finger"/>
    <property type="match status" value="9"/>
</dbReference>
<dbReference type="InterPro" id="IPR036236">
    <property type="entry name" value="Znf_C2H2_sf"/>
</dbReference>
<dbReference type="InterPro" id="IPR013087">
    <property type="entry name" value="Znf_C2H2_type"/>
</dbReference>
<dbReference type="PANTHER" id="PTHR24399:SF75">
    <property type="entry name" value="ZFP14 ZINC FINGER PROTEIN-RELATED"/>
    <property type="match status" value="1"/>
</dbReference>
<dbReference type="PANTHER" id="PTHR24399">
    <property type="entry name" value="ZINC FINGER AND BTB DOMAIN-CONTAINING"/>
    <property type="match status" value="1"/>
</dbReference>
<dbReference type="Pfam" id="PF00096">
    <property type="entry name" value="zf-C2H2"/>
    <property type="match status" value="8"/>
</dbReference>
<dbReference type="SMART" id="SM00355">
    <property type="entry name" value="ZnF_C2H2"/>
    <property type="match status" value="9"/>
</dbReference>
<dbReference type="SUPFAM" id="SSF57667">
    <property type="entry name" value="beta-beta-alpha zinc fingers"/>
    <property type="match status" value="5"/>
</dbReference>
<dbReference type="PROSITE" id="PS00028">
    <property type="entry name" value="ZINC_FINGER_C2H2_1"/>
    <property type="match status" value="9"/>
</dbReference>
<dbReference type="PROSITE" id="PS50157">
    <property type="entry name" value="ZINC_FINGER_C2H2_2"/>
    <property type="match status" value="9"/>
</dbReference>
<protein>
    <recommendedName>
        <fullName>Zinc finger protein 664</fullName>
    </recommendedName>
</protein>